<feature type="peptide" id="PRO_0000383656" description="Venom peptide 3" evidence="1">
    <location>
        <begin position="1" status="less than"/>
        <end position="10" status="greater than"/>
    </location>
</feature>
<feature type="non-terminal residue" evidence="2">
    <location>
        <position position="1"/>
    </location>
</feature>
<feature type="non-terminal residue" evidence="2">
    <location>
        <position position="10"/>
    </location>
</feature>
<protein>
    <recommendedName>
        <fullName evidence="2">Venom peptide 3</fullName>
    </recommendedName>
    <alternativeName>
        <fullName evidence="2">BaP-3</fullName>
    </alternativeName>
</protein>
<dbReference type="GO" id="GO:0005576">
    <property type="term" value="C:extracellular region"/>
    <property type="evidence" value="ECO:0007669"/>
    <property type="project" value="UniProtKB-SubCell"/>
</dbReference>
<evidence type="ECO:0000269" key="1">
    <source ref="1"/>
</evidence>
<evidence type="ECO:0000303" key="2">
    <source ref="1"/>
</evidence>
<evidence type="ECO:0000305" key="3"/>
<reference evidence="3" key="1">
    <citation type="submission" date="2009-07" db="UniProtKB">
        <title>Brazilian scorpion Brotheas amazonicus venom peptidomics.</title>
        <authorList>
            <person name="Ireno I.C."/>
            <person name="Rates B.A."/>
            <person name="Pimenta A.M.C."/>
        </authorList>
    </citation>
    <scope>PROTEIN SEQUENCE</scope>
    <scope>SUBCELLULAR LOCATION</scope>
    <scope>TISSUE SPECIFICITY</scope>
    <source>
        <tissue evidence="1">Venom</tissue>
    </source>
</reference>
<sequence>IGDIWSGIQG</sequence>
<keyword id="KW-0903">Direct protein sequencing</keyword>
<keyword id="KW-0964">Secreted</keyword>
<proteinExistence type="evidence at protein level"/>
<organism>
    <name type="scientific">Brotheas amazonicus</name>
    <name type="common">Scorpion</name>
    <dbReference type="NCBI Taxonomy" id="662117"/>
    <lineage>
        <taxon>Eukaryota</taxon>
        <taxon>Metazoa</taxon>
        <taxon>Ecdysozoa</taxon>
        <taxon>Arthropoda</taxon>
        <taxon>Chelicerata</taxon>
        <taxon>Arachnida</taxon>
        <taxon>Scorpiones</taxon>
        <taxon>Iurida</taxon>
        <taxon>Chactoidea</taxon>
        <taxon>Chactidae</taxon>
        <taxon>Brotheinae</taxon>
        <taxon>Brotheini</taxon>
        <taxon>Brotheina</taxon>
        <taxon>Brotheas</taxon>
    </lineage>
</organism>
<accession>P86344</accession>
<name>VP3_BROAA</name>
<comment type="subcellular location">
    <subcellularLocation>
        <location evidence="1">Secreted</location>
    </subcellularLocation>
</comment>
<comment type="tissue specificity">
    <text evidence="1">Expressed by the venom gland.</text>
</comment>